<reference key="1">
    <citation type="journal article" date="2003" name="Proc. Natl. Acad. Sci. U.S.A.">
        <title>The complete genome sequence of the Arabidopsis and tomato pathogen Pseudomonas syringae pv. tomato DC3000.</title>
        <authorList>
            <person name="Buell C.R."/>
            <person name="Joardar V."/>
            <person name="Lindeberg M."/>
            <person name="Selengut J."/>
            <person name="Paulsen I.T."/>
            <person name="Gwinn M.L."/>
            <person name="Dodson R.J."/>
            <person name="DeBoy R.T."/>
            <person name="Durkin A.S."/>
            <person name="Kolonay J.F."/>
            <person name="Madupu R."/>
            <person name="Daugherty S.C."/>
            <person name="Brinkac L.M."/>
            <person name="Beanan M.J."/>
            <person name="Haft D.H."/>
            <person name="Nelson W.C."/>
            <person name="Davidsen T.M."/>
            <person name="Zafar N."/>
            <person name="Zhou L."/>
            <person name="Liu J."/>
            <person name="Yuan Q."/>
            <person name="Khouri H.M."/>
            <person name="Fedorova N.B."/>
            <person name="Tran B."/>
            <person name="Russell D."/>
            <person name="Berry K.J."/>
            <person name="Utterback T.R."/>
            <person name="Van Aken S.E."/>
            <person name="Feldblyum T.V."/>
            <person name="D'Ascenzo M."/>
            <person name="Deng W.-L."/>
            <person name="Ramos A.R."/>
            <person name="Alfano J.R."/>
            <person name="Cartinhour S."/>
            <person name="Chatterjee A.K."/>
            <person name="Delaney T.P."/>
            <person name="Lazarowitz S.G."/>
            <person name="Martin G.B."/>
            <person name="Schneider D.J."/>
            <person name="Tang X."/>
            <person name="Bender C.L."/>
            <person name="White O."/>
            <person name="Fraser C.M."/>
            <person name="Collmer A."/>
        </authorList>
    </citation>
    <scope>NUCLEOTIDE SEQUENCE [LARGE SCALE GENOMIC DNA]</scope>
    <source>
        <strain>ATCC BAA-871 / DC3000</strain>
    </source>
</reference>
<dbReference type="EC" id="2.7.1.-" evidence="1"/>
<dbReference type="EMBL" id="AE016853">
    <property type="protein sequence ID" value="AAO57002.1"/>
    <property type="molecule type" value="Genomic_DNA"/>
</dbReference>
<dbReference type="RefSeq" id="NP_793307.1">
    <property type="nucleotide sequence ID" value="NC_004578.1"/>
</dbReference>
<dbReference type="SMR" id="Q87ZA2"/>
<dbReference type="STRING" id="223283.PSPTO_3527"/>
<dbReference type="GeneID" id="1185192"/>
<dbReference type="KEGG" id="pst:PSPTO_3527"/>
<dbReference type="PATRIC" id="fig|223283.9.peg.3615"/>
<dbReference type="eggNOG" id="COG1597">
    <property type="taxonomic scope" value="Bacteria"/>
</dbReference>
<dbReference type="HOGENOM" id="CLU_045532_1_1_6"/>
<dbReference type="OrthoDB" id="142078at2"/>
<dbReference type="PhylomeDB" id="Q87ZA2"/>
<dbReference type="Proteomes" id="UP000002515">
    <property type="component" value="Chromosome"/>
</dbReference>
<dbReference type="GO" id="GO:0005737">
    <property type="term" value="C:cytoplasm"/>
    <property type="evidence" value="ECO:0007669"/>
    <property type="project" value="UniProtKB-SubCell"/>
</dbReference>
<dbReference type="GO" id="GO:0005886">
    <property type="term" value="C:plasma membrane"/>
    <property type="evidence" value="ECO:0007669"/>
    <property type="project" value="TreeGrafter"/>
</dbReference>
<dbReference type="GO" id="GO:0005524">
    <property type="term" value="F:ATP binding"/>
    <property type="evidence" value="ECO:0007669"/>
    <property type="project" value="UniProtKB-UniRule"/>
</dbReference>
<dbReference type="GO" id="GO:0001727">
    <property type="term" value="F:lipid kinase activity"/>
    <property type="evidence" value="ECO:0007669"/>
    <property type="project" value="UniProtKB-UniRule"/>
</dbReference>
<dbReference type="GO" id="GO:0000287">
    <property type="term" value="F:magnesium ion binding"/>
    <property type="evidence" value="ECO:0007669"/>
    <property type="project" value="UniProtKB-UniRule"/>
</dbReference>
<dbReference type="GO" id="GO:0008654">
    <property type="term" value="P:phospholipid biosynthetic process"/>
    <property type="evidence" value="ECO:0007669"/>
    <property type="project" value="UniProtKB-UniRule"/>
</dbReference>
<dbReference type="Gene3D" id="2.60.200.40">
    <property type="match status" value="1"/>
</dbReference>
<dbReference type="Gene3D" id="3.40.50.10330">
    <property type="entry name" value="Probable inorganic polyphosphate/atp-NAD kinase, domain 1"/>
    <property type="match status" value="1"/>
</dbReference>
<dbReference type="HAMAP" id="MF_01377">
    <property type="entry name" value="YegS"/>
    <property type="match status" value="1"/>
</dbReference>
<dbReference type="InterPro" id="IPR017438">
    <property type="entry name" value="ATP-NAD_kinase_N"/>
</dbReference>
<dbReference type="InterPro" id="IPR005218">
    <property type="entry name" value="Diacylglycerol/lipid_kinase"/>
</dbReference>
<dbReference type="InterPro" id="IPR001206">
    <property type="entry name" value="Diacylglycerol_kinase_cat_dom"/>
</dbReference>
<dbReference type="InterPro" id="IPR022433">
    <property type="entry name" value="Lip_kinase_YegS"/>
</dbReference>
<dbReference type="InterPro" id="IPR050187">
    <property type="entry name" value="Lipid_Phosphate_FormReg"/>
</dbReference>
<dbReference type="InterPro" id="IPR016064">
    <property type="entry name" value="NAD/diacylglycerol_kinase_sf"/>
</dbReference>
<dbReference type="InterPro" id="IPR045540">
    <property type="entry name" value="YegS/DAGK_C"/>
</dbReference>
<dbReference type="NCBIfam" id="TIGR03702">
    <property type="entry name" value="lip_kinase_YegS"/>
    <property type="match status" value="1"/>
</dbReference>
<dbReference type="NCBIfam" id="NF009602">
    <property type="entry name" value="PRK13054.1"/>
    <property type="match status" value="1"/>
</dbReference>
<dbReference type="NCBIfam" id="TIGR00147">
    <property type="entry name" value="YegS/Rv2252/BmrU family lipid kinase"/>
    <property type="match status" value="1"/>
</dbReference>
<dbReference type="PANTHER" id="PTHR12358:SF106">
    <property type="entry name" value="LIPID KINASE YEGS"/>
    <property type="match status" value="1"/>
</dbReference>
<dbReference type="PANTHER" id="PTHR12358">
    <property type="entry name" value="SPHINGOSINE KINASE"/>
    <property type="match status" value="1"/>
</dbReference>
<dbReference type="Pfam" id="PF00781">
    <property type="entry name" value="DAGK_cat"/>
    <property type="match status" value="1"/>
</dbReference>
<dbReference type="Pfam" id="PF19279">
    <property type="entry name" value="YegS_C"/>
    <property type="match status" value="1"/>
</dbReference>
<dbReference type="SMART" id="SM00046">
    <property type="entry name" value="DAGKc"/>
    <property type="match status" value="1"/>
</dbReference>
<dbReference type="SUPFAM" id="SSF111331">
    <property type="entry name" value="NAD kinase/diacylglycerol kinase-like"/>
    <property type="match status" value="1"/>
</dbReference>
<dbReference type="PROSITE" id="PS50146">
    <property type="entry name" value="DAGK"/>
    <property type="match status" value="1"/>
</dbReference>
<sequence>MTQRRAMLILHGKQSLNEDVRDAVADKRKQGWELDVRLTWEAGDAQRLVNEALAAGHRHIVAGGGDGTLRDIAEALALAATKASLTILPLGTANDFARAAGVPLDVSKALQLMDVAPRAVDLGEVGGKLFLNMATGGFGSQVTANTSEDLKKVLGGAAYLFTGLTRFSELHAAHGELTGPDFHWRGDLLALGIGNGRQAGGGHELCPTALADDGLLDISILPAPQEVVGTLRSLLEGGLGIDNMFIRARLPWVELKSAQGLDINLDGEPLSGEDLRFVARPGALQVHLPANSPVLGSTPLLNRPD</sequence>
<evidence type="ECO:0000255" key="1">
    <source>
        <dbReference type="HAMAP-Rule" id="MF_01377"/>
    </source>
</evidence>
<feature type="chain" id="PRO_0000292154" description="Probable lipid kinase YegS-like">
    <location>
        <begin position="1"/>
        <end position="305"/>
    </location>
</feature>
<feature type="domain" description="DAGKc" evidence="1">
    <location>
        <begin position="1"/>
        <end position="129"/>
    </location>
</feature>
<feature type="active site" description="Proton acceptor" evidence="1">
    <location>
        <position position="268"/>
    </location>
</feature>
<feature type="binding site" evidence="1">
    <location>
        <position position="39"/>
    </location>
    <ligand>
        <name>ATP</name>
        <dbReference type="ChEBI" id="CHEBI:30616"/>
    </ligand>
</feature>
<feature type="binding site" evidence="1">
    <location>
        <begin position="65"/>
        <end position="71"/>
    </location>
    <ligand>
        <name>ATP</name>
        <dbReference type="ChEBI" id="CHEBI:30616"/>
    </ligand>
</feature>
<feature type="binding site" evidence="1">
    <location>
        <position position="92"/>
    </location>
    <ligand>
        <name>ATP</name>
        <dbReference type="ChEBI" id="CHEBI:30616"/>
    </ligand>
</feature>
<feature type="binding site" evidence="1">
    <location>
        <position position="210"/>
    </location>
    <ligand>
        <name>Mg(2+)</name>
        <dbReference type="ChEBI" id="CHEBI:18420"/>
    </ligand>
</feature>
<feature type="binding site" evidence="1">
    <location>
        <position position="213"/>
    </location>
    <ligand>
        <name>Mg(2+)</name>
        <dbReference type="ChEBI" id="CHEBI:18420"/>
    </ligand>
</feature>
<feature type="binding site" evidence="1">
    <location>
        <position position="215"/>
    </location>
    <ligand>
        <name>Mg(2+)</name>
        <dbReference type="ChEBI" id="CHEBI:18420"/>
    </ligand>
</feature>
<proteinExistence type="inferred from homology"/>
<organism>
    <name type="scientific">Pseudomonas syringae pv. tomato (strain ATCC BAA-871 / DC3000)</name>
    <dbReference type="NCBI Taxonomy" id="223283"/>
    <lineage>
        <taxon>Bacteria</taxon>
        <taxon>Pseudomonadati</taxon>
        <taxon>Pseudomonadota</taxon>
        <taxon>Gammaproteobacteria</taxon>
        <taxon>Pseudomonadales</taxon>
        <taxon>Pseudomonadaceae</taxon>
        <taxon>Pseudomonas</taxon>
    </lineage>
</organism>
<name>YEGS_PSESM</name>
<accession>Q87ZA2</accession>
<protein>
    <recommendedName>
        <fullName evidence="1">Probable lipid kinase YegS-like</fullName>
        <ecNumber evidence="1">2.7.1.-</ecNumber>
    </recommendedName>
</protein>
<gene>
    <name type="ordered locus">PSPTO_3527</name>
</gene>
<keyword id="KW-0067">ATP-binding</keyword>
<keyword id="KW-0963">Cytoplasm</keyword>
<keyword id="KW-0418">Kinase</keyword>
<keyword id="KW-0444">Lipid biosynthesis</keyword>
<keyword id="KW-0443">Lipid metabolism</keyword>
<keyword id="KW-0460">Magnesium</keyword>
<keyword id="KW-0479">Metal-binding</keyword>
<keyword id="KW-0547">Nucleotide-binding</keyword>
<keyword id="KW-0594">Phospholipid biosynthesis</keyword>
<keyword id="KW-1208">Phospholipid metabolism</keyword>
<keyword id="KW-1185">Reference proteome</keyword>
<keyword id="KW-0808">Transferase</keyword>
<comment type="function">
    <text evidence="1">Probably phosphorylates lipids; the in vivo substrate is unknown.</text>
</comment>
<comment type="cofactor">
    <cofactor evidence="1">
        <name>Mg(2+)</name>
        <dbReference type="ChEBI" id="CHEBI:18420"/>
    </cofactor>
    <cofactor evidence="1">
        <name>Ca(2+)</name>
        <dbReference type="ChEBI" id="CHEBI:29108"/>
    </cofactor>
    <text evidence="1">Binds 1 Mg(2+) ion per subunit. Ca(2+) may be able to substitute.</text>
</comment>
<comment type="subcellular location">
    <subcellularLocation>
        <location evidence="1">Cytoplasm</location>
    </subcellularLocation>
</comment>
<comment type="similarity">
    <text evidence="1">Belongs to the diacylglycerol/lipid kinase family. YegS lipid kinase subfamily.</text>
</comment>